<proteinExistence type="inferred from homology"/>
<feature type="chain" id="PRO_1000061029" description="Cyanate hydratase">
    <location>
        <begin position="1"/>
        <end position="150"/>
    </location>
</feature>
<feature type="active site" evidence="1">
    <location>
        <position position="91"/>
    </location>
</feature>
<feature type="active site" evidence="1">
    <location>
        <position position="94"/>
    </location>
</feature>
<feature type="active site" evidence="1">
    <location>
        <position position="117"/>
    </location>
</feature>
<organism>
    <name type="scientific">Synechococcus sp. (strain CC9311)</name>
    <dbReference type="NCBI Taxonomy" id="64471"/>
    <lineage>
        <taxon>Bacteria</taxon>
        <taxon>Bacillati</taxon>
        <taxon>Cyanobacteriota</taxon>
        <taxon>Cyanophyceae</taxon>
        <taxon>Synechococcales</taxon>
        <taxon>Synechococcaceae</taxon>
        <taxon>Synechococcus</taxon>
    </lineage>
</organism>
<gene>
    <name evidence="1" type="primary">cynS</name>
    <name type="ordered locus">sync_2901</name>
</gene>
<sequence length="150" mass="16336">MAAPSPSTLTASLMAAKKAKGLSFADLEVALGLDEVWIASLFYGQATASPEEAEKLATLLGLDPAITAALQEFPTKGSLDPVIPTDPLIYRFYEIMQVYGMPLKDVIQEKFGDGIMSAIDFTLDVDKVEDPKGDRVKVTMCGKFLPYKKW</sequence>
<keyword id="KW-0456">Lyase</keyword>
<keyword id="KW-1185">Reference proteome</keyword>
<protein>
    <recommendedName>
        <fullName evidence="1">Cyanate hydratase</fullName>
        <shortName evidence="1">Cyanase</shortName>
        <ecNumber evidence="1">4.2.1.104</ecNumber>
    </recommendedName>
    <alternativeName>
        <fullName evidence="1">Cyanate hydrolase</fullName>
    </alternativeName>
    <alternativeName>
        <fullName evidence="1">Cyanate lyase</fullName>
    </alternativeName>
</protein>
<accession>Q0I634</accession>
<comment type="function">
    <text evidence="1">Catalyzes the reaction of cyanate with bicarbonate to produce ammonia and carbon dioxide.</text>
</comment>
<comment type="catalytic activity">
    <reaction evidence="1">
        <text>cyanate + hydrogencarbonate + 3 H(+) = NH4(+) + 2 CO2</text>
        <dbReference type="Rhea" id="RHEA:11120"/>
        <dbReference type="ChEBI" id="CHEBI:15378"/>
        <dbReference type="ChEBI" id="CHEBI:16526"/>
        <dbReference type="ChEBI" id="CHEBI:17544"/>
        <dbReference type="ChEBI" id="CHEBI:28938"/>
        <dbReference type="ChEBI" id="CHEBI:29195"/>
        <dbReference type="EC" id="4.2.1.104"/>
    </reaction>
</comment>
<comment type="similarity">
    <text evidence="1">Belongs to the cyanase family.</text>
</comment>
<dbReference type="EC" id="4.2.1.104" evidence="1"/>
<dbReference type="EMBL" id="CP000435">
    <property type="protein sequence ID" value="ABI47677.1"/>
    <property type="molecule type" value="Genomic_DNA"/>
</dbReference>
<dbReference type="RefSeq" id="WP_011620788.1">
    <property type="nucleotide sequence ID" value="NC_008319.1"/>
</dbReference>
<dbReference type="SMR" id="Q0I634"/>
<dbReference type="STRING" id="64471.sync_2901"/>
<dbReference type="KEGG" id="syg:sync_2901"/>
<dbReference type="eggNOG" id="COG1513">
    <property type="taxonomic scope" value="Bacteria"/>
</dbReference>
<dbReference type="HOGENOM" id="CLU_103452_1_0_3"/>
<dbReference type="OrthoDB" id="9785870at2"/>
<dbReference type="Proteomes" id="UP000001961">
    <property type="component" value="Chromosome"/>
</dbReference>
<dbReference type="GO" id="GO:0008824">
    <property type="term" value="F:cyanate hydratase activity"/>
    <property type="evidence" value="ECO:0007669"/>
    <property type="project" value="UniProtKB-UniRule"/>
</dbReference>
<dbReference type="GO" id="GO:0003677">
    <property type="term" value="F:DNA binding"/>
    <property type="evidence" value="ECO:0007669"/>
    <property type="project" value="InterPro"/>
</dbReference>
<dbReference type="GO" id="GO:0009439">
    <property type="term" value="P:cyanate metabolic process"/>
    <property type="evidence" value="ECO:0007669"/>
    <property type="project" value="UniProtKB-UniRule"/>
</dbReference>
<dbReference type="CDD" id="cd00559">
    <property type="entry name" value="Cyanase_C"/>
    <property type="match status" value="1"/>
</dbReference>
<dbReference type="CDD" id="cd00093">
    <property type="entry name" value="HTH_XRE"/>
    <property type="match status" value="1"/>
</dbReference>
<dbReference type="Gene3D" id="3.30.1160.10">
    <property type="entry name" value="Cyanate lyase, C-terminal domain"/>
    <property type="match status" value="1"/>
</dbReference>
<dbReference type="Gene3D" id="1.10.260.40">
    <property type="entry name" value="lambda repressor-like DNA-binding domains"/>
    <property type="match status" value="1"/>
</dbReference>
<dbReference type="HAMAP" id="MF_00535">
    <property type="entry name" value="Cyanate_hydrat"/>
    <property type="match status" value="1"/>
</dbReference>
<dbReference type="InterPro" id="IPR001387">
    <property type="entry name" value="Cro/C1-type_HTH"/>
</dbReference>
<dbReference type="InterPro" id="IPR008076">
    <property type="entry name" value="Cyanase"/>
</dbReference>
<dbReference type="InterPro" id="IPR003712">
    <property type="entry name" value="Cyanate_lyase_C"/>
</dbReference>
<dbReference type="InterPro" id="IPR036581">
    <property type="entry name" value="Cyanate_lyase_C_sf"/>
</dbReference>
<dbReference type="InterPro" id="IPR048564">
    <property type="entry name" value="CYNS_N"/>
</dbReference>
<dbReference type="InterPro" id="IPR010982">
    <property type="entry name" value="Lambda_DNA-bd_dom_sf"/>
</dbReference>
<dbReference type="NCBIfam" id="TIGR00673">
    <property type="entry name" value="cynS"/>
    <property type="match status" value="1"/>
</dbReference>
<dbReference type="NCBIfam" id="NF002773">
    <property type="entry name" value="PRK02866.1"/>
    <property type="match status" value="1"/>
</dbReference>
<dbReference type="PANTHER" id="PTHR34186">
    <property type="entry name" value="CYANATE HYDRATASE"/>
    <property type="match status" value="1"/>
</dbReference>
<dbReference type="PANTHER" id="PTHR34186:SF2">
    <property type="entry name" value="CYANATE HYDRATASE"/>
    <property type="match status" value="1"/>
</dbReference>
<dbReference type="Pfam" id="PF02560">
    <property type="entry name" value="Cyanate_lyase"/>
    <property type="match status" value="1"/>
</dbReference>
<dbReference type="Pfam" id="PF21291">
    <property type="entry name" value="CYNS_N"/>
    <property type="match status" value="1"/>
</dbReference>
<dbReference type="PIRSF" id="PIRSF001263">
    <property type="entry name" value="Cyanate_hydratas"/>
    <property type="match status" value="1"/>
</dbReference>
<dbReference type="PRINTS" id="PR01693">
    <property type="entry name" value="CYANASE"/>
</dbReference>
<dbReference type="SMART" id="SM01116">
    <property type="entry name" value="Cyanate_lyase"/>
    <property type="match status" value="1"/>
</dbReference>
<dbReference type="SMART" id="SM00530">
    <property type="entry name" value="HTH_XRE"/>
    <property type="match status" value="1"/>
</dbReference>
<dbReference type="SUPFAM" id="SSF55234">
    <property type="entry name" value="Cyanase C-terminal domain"/>
    <property type="match status" value="1"/>
</dbReference>
<dbReference type="SUPFAM" id="SSF47413">
    <property type="entry name" value="lambda repressor-like DNA-binding domains"/>
    <property type="match status" value="1"/>
</dbReference>
<reference key="1">
    <citation type="journal article" date="2006" name="Proc. Natl. Acad. Sci. U.S.A.">
        <title>Genome sequence of Synechococcus CC9311: insights into adaptation to a coastal environment.</title>
        <authorList>
            <person name="Palenik B."/>
            <person name="Ren Q."/>
            <person name="Dupont C.L."/>
            <person name="Myers G.S."/>
            <person name="Heidelberg J.F."/>
            <person name="Badger J.H."/>
            <person name="Madupu R."/>
            <person name="Nelson W.C."/>
            <person name="Brinkac L.M."/>
            <person name="Dodson R.J."/>
            <person name="Durkin A.S."/>
            <person name="Daugherty S.C."/>
            <person name="Sullivan S.A."/>
            <person name="Khouri H."/>
            <person name="Mohamoud Y."/>
            <person name="Halpin R."/>
            <person name="Paulsen I.T."/>
        </authorList>
    </citation>
    <scope>NUCLEOTIDE SEQUENCE [LARGE SCALE GENOMIC DNA]</scope>
    <source>
        <strain>CC9311</strain>
    </source>
</reference>
<name>CYNS_SYNS3</name>
<evidence type="ECO:0000255" key="1">
    <source>
        <dbReference type="HAMAP-Rule" id="MF_00535"/>
    </source>
</evidence>